<dbReference type="EMBL" id="X05021">
    <property type="protein sequence ID" value="CAA28678.1"/>
    <property type="molecule type" value="mRNA"/>
</dbReference>
<dbReference type="EMBL" id="AB020237">
    <property type="protein sequence ID" value="BAA77362.1"/>
    <property type="molecule type" value="Genomic_DNA"/>
</dbReference>
<dbReference type="EMBL" id="AJ307670">
    <property type="protein sequence ID" value="CAC38113.1"/>
    <property type="molecule type" value="Genomic_DNA"/>
</dbReference>
<dbReference type="EMBL" id="AK007837">
    <property type="protein sequence ID" value="BAB25295.1"/>
    <property type="molecule type" value="mRNA"/>
</dbReference>
<dbReference type="EMBL" id="AK008531">
    <property type="protein sequence ID" value="BAB25724.1"/>
    <property type="molecule type" value="mRNA"/>
</dbReference>
<dbReference type="EMBL" id="AK010286">
    <property type="protein sequence ID" value="BAB26822.1"/>
    <property type="molecule type" value="mRNA"/>
</dbReference>
<dbReference type="EMBL" id="AK150907">
    <property type="protein sequence ID" value="BAE29949.1"/>
    <property type="molecule type" value="mRNA"/>
</dbReference>
<dbReference type="EMBL" id="AK167792">
    <property type="protein sequence ID" value="BAE39822.1"/>
    <property type="molecule type" value="mRNA"/>
</dbReference>
<dbReference type="EMBL" id="AK167915">
    <property type="protein sequence ID" value="BAE39922.1"/>
    <property type="molecule type" value="mRNA"/>
</dbReference>
<dbReference type="EMBL" id="CH466531">
    <property type="protein sequence ID" value="EDL16941.1"/>
    <property type="molecule type" value="Genomic_DNA"/>
</dbReference>
<dbReference type="EMBL" id="BC056958">
    <property type="protein sequence ID" value="AAH56958.1"/>
    <property type="molecule type" value="mRNA"/>
</dbReference>
<dbReference type="EMBL" id="BC081430">
    <property type="protein sequence ID" value="AAH81430.1"/>
    <property type="molecule type" value="mRNA"/>
</dbReference>
<dbReference type="EMBL" id="BC086939">
    <property type="protein sequence ID" value="AAH86939.1"/>
    <property type="molecule type" value="mRNA"/>
</dbReference>
<dbReference type="CCDS" id="CCDS40083.1"/>
<dbReference type="PIR" id="S11557">
    <property type="entry name" value="R5MS27"/>
</dbReference>
<dbReference type="RefSeq" id="NP_036105.2">
    <property type="nucleotide sequence ID" value="NM_011975.3"/>
</dbReference>
<dbReference type="PDB" id="6SWA">
    <property type="method" value="EM"/>
    <property type="resolution" value="3.10 A"/>
    <property type="chains" value="Y=1-148"/>
</dbReference>
<dbReference type="PDB" id="7CPU">
    <property type="method" value="EM"/>
    <property type="resolution" value="2.82 A"/>
    <property type="chains" value="La=1-148"/>
</dbReference>
<dbReference type="PDB" id="7CPV">
    <property type="method" value="EM"/>
    <property type="resolution" value="3.03 A"/>
    <property type="chains" value="La=1-148"/>
</dbReference>
<dbReference type="PDB" id="7LS1">
    <property type="method" value="EM"/>
    <property type="resolution" value="3.30 A"/>
    <property type="chains" value="U2=1-148"/>
</dbReference>
<dbReference type="PDB" id="7LS2">
    <property type="method" value="EM"/>
    <property type="resolution" value="3.10 A"/>
    <property type="chains" value="U2=1-148"/>
</dbReference>
<dbReference type="PDBsum" id="6SWA"/>
<dbReference type="PDBsum" id="7CPU"/>
<dbReference type="PDBsum" id="7CPV"/>
<dbReference type="PDBsum" id="7LS1"/>
<dbReference type="PDBsum" id="7LS2"/>
<dbReference type="EMDB" id="EMD-10321"/>
<dbReference type="EMDB" id="EMD-23500"/>
<dbReference type="EMDB" id="EMD-23501"/>
<dbReference type="EMDB" id="EMD-30432"/>
<dbReference type="EMDB" id="EMD-30433"/>
<dbReference type="SMR" id="P14115"/>
<dbReference type="BioGRID" id="205001">
    <property type="interactions" value="57"/>
</dbReference>
<dbReference type="ComplexPortal" id="CPX-5262">
    <property type="entry name" value="60S cytosolic large ribosomal subunit"/>
</dbReference>
<dbReference type="ComplexPortal" id="CPX-7662">
    <property type="entry name" value="60S cytosolic large ribosomal subunit, testis-specific variant"/>
</dbReference>
<dbReference type="ComplexPortal" id="CPX-7663">
    <property type="entry name" value="60S cytosolic large ribosomal subunit, striated muscle variant"/>
</dbReference>
<dbReference type="FunCoup" id="P14115">
    <property type="interactions" value="2185"/>
</dbReference>
<dbReference type="IntAct" id="P14115">
    <property type="interactions" value="1"/>
</dbReference>
<dbReference type="STRING" id="10090.ENSMUSP00000123410"/>
<dbReference type="GlyGen" id="P14115">
    <property type="glycosylation" value="1 site, 1 O-linked glycan (1 site)"/>
</dbReference>
<dbReference type="iPTMnet" id="P14115"/>
<dbReference type="PhosphoSitePlus" id="P14115"/>
<dbReference type="SwissPalm" id="P14115"/>
<dbReference type="jPOST" id="P14115"/>
<dbReference type="PaxDb" id="10090-ENSMUSP00000076607"/>
<dbReference type="PeptideAtlas" id="P14115"/>
<dbReference type="ProteomicsDB" id="255019"/>
<dbReference type="Pumba" id="P14115"/>
<dbReference type="Antibodypedia" id="24122">
    <property type="antibodies" value="170 antibodies from 29 providers"/>
</dbReference>
<dbReference type="DNASU" id="26451"/>
<dbReference type="Ensembl" id="ENSMUST00000143107.2">
    <property type="protein sequence ID" value="ENSMUSP00000123410.2"/>
    <property type="gene ID" value="ENSMUSG00000046364.15"/>
</dbReference>
<dbReference type="GeneID" id="26451"/>
<dbReference type="KEGG" id="mmu:26451"/>
<dbReference type="UCSC" id="uc009jdr.1">
    <property type="organism name" value="mouse"/>
</dbReference>
<dbReference type="AGR" id="MGI:1347076"/>
<dbReference type="CTD" id="6157"/>
<dbReference type="MGI" id="MGI:1347076">
    <property type="gene designation" value="Rpl27a"/>
</dbReference>
<dbReference type="VEuPathDB" id="HostDB:ENSMUSG00000046364"/>
<dbReference type="eggNOG" id="KOG1742">
    <property type="taxonomic scope" value="Eukaryota"/>
</dbReference>
<dbReference type="GeneTree" id="ENSGT00390000005534"/>
<dbReference type="HOGENOM" id="CLU_109163_1_0_1"/>
<dbReference type="InParanoid" id="P14115"/>
<dbReference type="OMA" id="WGRVGQH"/>
<dbReference type="OrthoDB" id="61900at2759"/>
<dbReference type="PhylomeDB" id="P14115"/>
<dbReference type="TreeFam" id="TF313742"/>
<dbReference type="Reactome" id="R-MMU-156827">
    <property type="pathway name" value="L13a-mediated translational silencing of Ceruloplasmin expression"/>
</dbReference>
<dbReference type="Reactome" id="R-MMU-1799339">
    <property type="pathway name" value="SRP-dependent cotranslational protein targeting to membrane"/>
</dbReference>
<dbReference type="Reactome" id="R-MMU-6791226">
    <property type="pathway name" value="Major pathway of rRNA processing in the nucleolus and cytosol"/>
</dbReference>
<dbReference type="Reactome" id="R-MMU-72689">
    <property type="pathway name" value="Formation of a pool of free 40S subunits"/>
</dbReference>
<dbReference type="Reactome" id="R-MMU-72706">
    <property type="pathway name" value="GTP hydrolysis and joining of the 60S ribosomal subunit"/>
</dbReference>
<dbReference type="Reactome" id="R-MMU-9629569">
    <property type="pathway name" value="Protein hydroxylation"/>
</dbReference>
<dbReference type="Reactome" id="R-MMU-975956">
    <property type="pathway name" value="Nonsense Mediated Decay (NMD) independent of the Exon Junction Complex (EJC)"/>
</dbReference>
<dbReference type="Reactome" id="R-MMU-975957">
    <property type="pathway name" value="Nonsense Mediated Decay (NMD) enhanced by the Exon Junction Complex (EJC)"/>
</dbReference>
<dbReference type="BioGRID-ORCS" id="26451">
    <property type="hits" value="24 hits in 73 CRISPR screens"/>
</dbReference>
<dbReference type="CD-CODE" id="CE726F99">
    <property type="entry name" value="Postsynaptic density"/>
</dbReference>
<dbReference type="ChiTaRS" id="Rpl27a">
    <property type="organism name" value="mouse"/>
</dbReference>
<dbReference type="PRO" id="PR:P14115"/>
<dbReference type="Proteomes" id="UP000000589">
    <property type="component" value="Chromosome 7"/>
</dbReference>
<dbReference type="RNAct" id="P14115">
    <property type="molecule type" value="protein"/>
</dbReference>
<dbReference type="Bgee" id="ENSMUSG00000046364">
    <property type="expression patterns" value="Expressed in epiblast (generic) and 66 other cell types or tissues"/>
</dbReference>
<dbReference type="ExpressionAtlas" id="P14115">
    <property type="expression patterns" value="baseline and differential"/>
</dbReference>
<dbReference type="GO" id="GO:0005737">
    <property type="term" value="C:cytoplasm"/>
    <property type="evidence" value="ECO:0000314"/>
    <property type="project" value="ComplexPortal"/>
</dbReference>
<dbReference type="GO" id="GO:0005829">
    <property type="term" value="C:cytosol"/>
    <property type="evidence" value="ECO:0000304"/>
    <property type="project" value="Reactome"/>
</dbReference>
<dbReference type="GO" id="GO:0022625">
    <property type="term" value="C:cytosolic large ribosomal subunit"/>
    <property type="evidence" value="ECO:0000314"/>
    <property type="project" value="UniProtKB"/>
</dbReference>
<dbReference type="GO" id="GO:0022626">
    <property type="term" value="C:cytosolic ribosome"/>
    <property type="evidence" value="ECO:0000316"/>
    <property type="project" value="MGI"/>
</dbReference>
<dbReference type="GO" id="GO:0005783">
    <property type="term" value="C:endoplasmic reticulum"/>
    <property type="evidence" value="ECO:0007669"/>
    <property type="project" value="Ensembl"/>
</dbReference>
<dbReference type="GO" id="GO:0098794">
    <property type="term" value="C:postsynapse"/>
    <property type="evidence" value="ECO:0000303"/>
    <property type="project" value="SynGO"/>
</dbReference>
<dbReference type="GO" id="GO:0098793">
    <property type="term" value="C:presynapse"/>
    <property type="evidence" value="ECO:0000303"/>
    <property type="project" value="SynGO"/>
</dbReference>
<dbReference type="GO" id="GO:0005840">
    <property type="term" value="C:ribosome"/>
    <property type="evidence" value="ECO:0000303"/>
    <property type="project" value="SynGO"/>
</dbReference>
<dbReference type="GO" id="GO:0045202">
    <property type="term" value="C:synapse"/>
    <property type="evidence" value="ECO:0000314"/>
    <property type="project" value="SynGO"/>
</dbReference>
<dbReference type="GO" id="GO:0003735">
    <property type="term" value="F:structural constituent of ribosome"/>
    <property type="evidence" value="ECO:0000314"/>
    <property type="project" value="UniProtKB"/>
</dbReference>
<dbReference type="GO" id="GO:0002181">
    <property type="term" value="P:cytoplasmic translation"/>
    <property type="evidence" value="ECO:0000303"/>
    <property type="project" value="ComplexPortal"/>
</dbReference>
<dbReference type="GO" id="GO:0006412">
    <property type="term" value="P:translation"/>
    <property type="evidence" value="ECO:0000316"/>
    <property type="project" value="MGI"/>
</dbReference>
<dbReference type="GO" id="GO:0140242">
    <property type="term" value="P:translation at postsynapse"/>
    <property type="evidence" value="ECO:0000303"/>
    <property type="project" value="SynGO"/>
</dbReference>
<dbReference type="GO" id="GO:0140236">
    <property type="term" value="P:translation at presynapse"/>
    <property type="evidence" value="ECO:0000303"/>
    <property type="project" value="SynGO"/>
</dbReference>
<dbReference type="FunFam" id="3.100.10.10:FF:000024">
    <property type="entry name" value="RPL27A isoform 10"/>
    <property type="match status" value="1"/>
</dbReference>
<dbReference type="Gene3D" id="3.100.10.10">
    <property type="match status" value="1"/>
</dbReference>
<dbReference type="Gene3D" id="4.10.990.10">
    <property type="match status" value="1"/>
</dbReference>
<dbReference type="HAMAP" id="MF_01341">
    <property type="entry name" value="Ribosomal_uL15"/>
    <property type="match status" value="1"/>
</dbReference>
<dbReference type="InterPro" id="IPR027386">
    <property type="entry name" value="Rbsml_uL15_N"/>
</dbReference>
<dbReference type="InterPro" id="IPR030878">
    <property type="entry name" value="Ribosomal_uL15"/>
</dbReference>
<dbReference type="InterPro" id="IPR021131">
    <property type="entry name" value="Ribosomal_uL15/eL18"/>
</dbReference>
<dbReference type="InterPro" id="IPR036227">
    <property type="entry name" value="Ribosomal_uL15/eL18_sf"/>
</dbReference>
<dbReference type="InterPro" id="IPR001196">
    <property type="entry name" value="Ribosomal_uL15_CS"/>
</dbReference>
<dbReference type="PANTHER" id="PTHR11721">
    <property type="entry name" value="60S RIBOSOMAL PROTEIN L27A"/>
    <property type="match status" value="1"/>
</dbReference>
<dbReference type="PANTHER" id="PTHR11721:SF3">
    <property type="entry name" value="LARGE RIBOSOMAL SUBUNIT PROTEIN UL15"/>
    <property type="match status" value="1"/>
</dbReference>
<dbReference type="Pfam" id="PF00828">
    <property type="entry name" value="Ribosomal_L27A"/>
    <property type="match status" value="1"/>
</dbReference>
<dbReference type="SUPFAM" id="SSF52080">
    <property type="entry name" value="Ribosomal proteins L15p and L18e"/>
    <property type="match status" value="1"/>
</dbReference>
<dbReference type="PROSITE" id="PS00475">
    <property type="entry name" value="RIBOSOMAL_L15"/>
    <property type="match status" value="1"/>
</dbReference>
<feature type="chain" id="PRO_0000104880" description="Large ribosomal subunit protein uL15">
    <location>
        <begin position="1"/>
        <end position="148"/>
    </location>
</feature>
<feature type="region of interest" description="Disordered" evidence="2">
    <location>
        <begin position="1"/>
        <end position="37"/>
    </location>
</feature>
<feature type="compositionally biased region" description="Basic residues" evidence="2">
    <location>
        <begin position="1"/>
        <end position="30"/>
    </location>
</feature>
<feature type="modified residue" description="(3S)-3-hydroxyhistidine" evidence="1">
    <location>
        <position position="39"/>
    </location>
</feature>
<feature type="modified residue" description="N6-acetyllysine" evidence="1">
    <location>
        <position position="47"/>
    </location>
</feature>
<feature type="modified residue" description="N6-acetyllysine" evidence="1">
    <location>
        <position position="55"/>
    </location>
</feature>
<feature type="modified residue" description="Phosphoserine" evidence="7">
    <location>
        <position position="68"/>
    </location>
</feature>
<feature type="modified residue" description="N6-acetyllysine" evidence="1">
    <location>
        <position position="110"/>
    </location>
</feature>
<feature type="sequence conflict" description="In Ref. 1; CAA28678." evidence="4" ref="1">
    <original>G</original>
    <variation>S</variation>
    <location>
        <position position="30"/>
    </location>
</feature>
<feature type="sequence conflict" description="In Ref. 1; CAA28678 and 2; BAA77362." evidence="4" ref="1 2">
    <original>L</original>
    <variation>P</variation>
    <location>
        <position position="78"/>
    </location>
</feature>
<keyword id="KW-0002">3D-structure</keyword>
<keyword id="KW-0007">Acetylation</keyword>
<keyword id="KW-0963">Cytoplasm</keyword>
<keyword id="KW-0379">Hydroxylation</keyword>
<keyword id="KW-0597">Phosphoprotein</keyword>
<keyword id="KW-1185">Reference proteome</keyword>
<keyword id="KW-0687">Ribonucleoprotein</keyword>
<keyword id="KW-0689">Ribosomal protein</keyword>
<evidence type="ECO:0000250" key="1">
    <source>
        <dbReference type="UniProtKB" id="P46776"/>
    </source>
</evidence>
<evidence type="ECO:0000256" key="2">
    <source>
        <dbReference type="SAM" id="MobiDB-lite"/>
    </source>
</evidence>
<evidence type="ECO:0000269" key="3">
    <source>
    </source>
</evidence>
<evidence type="ECO:0000305" key="4"/>
<evidence type="ECO:0007744" key="5">
    <source>
        <dbReference type="PDB" id="7CPU"/>
    </source>
</evidence>
<evidence type="ECO:0007744" key="6">
    <source>
        <dbReference type="PDB" id="7CPV"/>
    </source>
</evidence>
<evidence type="ECO:0007744" key="7">
    <source>
    </source>
</evidence>
<sequence>MPSRLRKTRKLRGHVSHGHGRIGKHRKHPGGRGNAGGMHHHRINFDKYHPGYFGKVGMRHYHLKRNQSFCPTVNLDKLWTLVSEQTRVNAAKNKTGVAPIIDVVRSGYYKVLGKGKLPKQPVIVKAKFFSRRAEEKIKGVGGACVLVA</sequence>
<accession>P14115</accession>
<accession>Q9CQ16</accession>
<accession>Q9R1X6</accession>
<comment type="function">
    <text evidence="3">Component of the large ribosomal subunit (PubMed:36517592). The ribosome is a large ribonucleoprotein complex responsible for the synthesis of proteins in the cell (PubMed:36517592).</text>
</comment>
<comment type="subunit">
    <text evidence="3">Component of the large ribosomal subunit.</text>
</comment>
<comment type="subcellular location">
    <subcellularLocation>
        <location evidence="3">Cytoplasm</location>
    </subcellularLocation>
</comment>
<comment type="PTM">
    <text evidence="1">Hydroxylated on His-39 by MINA.</text>
</comment>
<comment type="similarity">
    <text evidence="4">Belongs to the universal ribosomal protein uL15 family.</text>
</comment>
<name>RL27A_MOUSE</name>
<proteinExistence type="evidence at protein level"/>
<protein>
    <recommendedName>
        <fullName evidence="4">Large ribosomal subunit protein uL15</fullName>
    </recommendedName>
    <alternativeName>
        <fullName>60S ribosomal protein L27a</fullName>
    </alternativeName>
    <alternativeName>
        <fullName>L29</fullName>
    </alternativeName>
</protein>
<organism>
    <name type="scientific">Mus musculus</name>
    <name type="common">Mouse</name>
    <dbReference type="NCBI Taxonomy" id="10090"/>
    <lineage>
        <taxon>Eukaryota</taxon>
        <taxon>Metazoa</taxon>
        <taxon>Chordata</taxon>
        <taxon>Craniata</taxon>
        <taxon>Vertebrata</taxon>
        <taxon>Euteleostomi</taxon>
        <taxon>Mammalia</taxon>
        <taxon>Eutheria</taxon>
        <taxon>Euarchontoglires</taxon>
        <taxon>Glires</taxon>
        <taxon>Rodentia</taxon>
        <taxon>Myomorpha</taxon>
        <taxon>Muroidea</taxon>
        <taxon>Muridae</taxon>
        <taxon>Murinae</taxon>
        <taxon>Mus</taxon>
        <taxon>Mus</taxon>
    </lineage>
</organism>
<reference key="1">
    <citation type="journal article" date="1987" name="Nucleic Acids Res.">
        <title>Isolation and characterisation of a murine cDNA clone highly homologous to the yeast L29 ribosomal protein gene.</title>
        <authorList>
            <person name="Belhumeur P."/>
            <person name="Paterno G.D."/>
            <person name="Boileau G."/>
            <person name="Claverie J.-M."/>
            <person name="Skup D."/>
        </authorList>
    </citation>
    <scope>NUCLEOTIDE SEQUENCE [MRNA]</scope>
    <source>
        <tissue>Kidney</tissue>
    </source>
</reference>
<reference key="2">
    <citation type="journal article" date="1999" name="Cytogenet. Cell Genet.">
        <title>Genomic structure and chromosome location of RPL27A/Rpl27a, the genes encoding human and mouse ribosomal protein L27A.</title>
        <authorList>
            <person name="Kusuda J."/>
            <person name="Hirai M."/>
            <person name="Tanuma R."/>
            <person name="Hirata M."/>
            <person name="Hashimoto K."/>
        </authorList>
    </citation>
    <scope>NUCLEOTIDE SEQUENCE [GENOMIC DNA]</scope>
</reference>
<reference key="3">
    <citation type="journal article" date="2001" name="Cytogenet. Cell Genet.">
        <title>Comparative genomic sequencing reveals a strikingly similar architecture of a conserved syntenic region on human chromosome 11p15.3 (including gene ST5) and mouse chromosome 7.</title>
        <authorList>
            <person name="Amid C."/>
            <person name="Bahr A."/>
            <person name="Mujica A."/>
            <person name="Sampson N."/>
            <person name="Bikar S.E."/>
            <person name="Winterpacht A."/>
            <person name="Zabel B."/>
            <person name="Hankeln T."/>
            <person name="Schmidt E.R."/>
        </authorList>
    </citation>
    <scope>NUCLEOTIDE SEQUENCE [GENOMIC DNA]</scope>
</reference>
<reference key="4">
    <citation type="journal article" date="2005" name="Science">
        <title>The transcriptional landscape of the mammalian genome.</title>
        <authorList>
            <person name="Carninci P."/>
            <person name="Kasukawa T."/>
            <person name="Katayama S."/>
            <person name="Gough J."/>
            <person name="Frith M.C."/>
            <person name="Maeda N."/>
            <person name="Oyama R."/>
            <person name="Ravasi T."/>
            <person name="Lenhard B."/>
            <person name="Wells C."/>
            <person name="Kodzius R."/>
            <person name="Shimokawa K."/>
            <person name="Bajic V.B."/>
            <person name="Brenner S.E."/>
            <person name="Batalov S."/>
            <person name="Forrest A.R."/>
            <person name="Zavolan M."/>
            <person name="Davis M.J."/>
            <person name="Wilming L.G."/>
            <person name="Aidinis V."/>
            <person name="Allen J.E."/>
            <person name="Ambesi-Impiombato A."/>
            <person name="Apweiler R."/>
            <person name="Aturaliya R.N."/>
            <person name="Bailey T.L."/>
            <person name="Bansal M."/>
            <person name="Baxter L."/>
            <person name="Beisel K.W."/>
            <person name="Bersano T."/>
            <person name="Bono H."/>
            <person name="Chalk A.M."/>
            <person name="Chiu K.P."/>
            <person name="Choudhary V."/>
            <person name="Christoffels A."/>
            <person name="Clutterbuck D.R."/>
            <person name="Crowe M.L."/>
            <person name="Dalla E."/>
            <person name="Dalrymple B.P."/>
            <person name="de Bono B."/>
            <person name="Della Gatta G."/>
            <person name="di Bernardo D."/>
            <person name="Down T."/>
            <person name="Engstrom P."/>
            <person name="Fagiolini M."/>
            <person name="Faulkner G."/>
            <person name="Fletcher C.F."/>
            <person name="Fukushima T."/>
            <person name="Furuno M."/>
            <person name="Futaki S."/>
            <person name="Gariboldi M."/>
            <person name="Georgii-Hemming P."/>
            <person name="Gingeras T.R."/>
            <person name="Gojobori T."/>
            <person name="Green R.E."/>
            <person name="Gustincich S."/>
            <person name="Harbers M."/>
            <person name="Hayashi Y."/>
            <person name="Hensch T.K."/>
            <person name="Hirokawa N."/>
            <person name="Hill D."/>
            <person name="Huminiecki L."/>
            <person name="Iacono M."/>
            <person name="Ikeo K."/>
            <person name="Iwama A."/>
            <person name="Ishikawa T."/>
            <person name="Jakt M."/>
            <person name="Kanapin A."/>
            <person name="Katoh M."/>
            <person name="Kawasawa Y."/>
            <person name="Kelso J."/>
            <person name="Kitamura H."/>
            <person name="Kitano H."/>
            <person name="Kollias G."/>
            <person name="Krishnan S.P."/>
            <person name="Kruger A."/>
            <person name="Kummerfeld S.K."/>
            <person name="Kurochkin I.V."/>
            <person name="Lareau L.F."/>
            <person name="Lazarevic D."/>
            <person name="Lipovich L."/>
            <person name="Liu J."/>
            <person name="Liuni S."/>
            <person name="McWilliam S."/>
            <person name="Madan Babu M."/>
            <person name="Madera M."/>
            <person name="Marchionni L."/>
            <person name="Matsuda H."/>
            <person name="Matsuzawa S."/>
            <person name="Miki H."/>
            <person name="Mignone F."/>
            <person name="Miyake S."/>
            <person name="Morris K."/>
            <person name="Mottagui-Tabar S."/>
            <person name="Mulder N."/>
            <person name="Nakano N."/>
            <person name="Nakauchi H."/>
            <person name="Ng P."/>
            <person name="Nilsson R."/>
            <person name="Nishiguchi S."/>
            <person name="Nishikawa S."/>
            <person name="Nori F."/>
            <person name="Ohara O."/>
            <person name="Okazaki Y."/>
            <person name="Orlando V."/>
            <person name="Pang K.C."/>
            <person name="Pavan W.J."/>
            <person name="Pavesi G."/>
            <person name="Pesole G."/>
            <person name="Petrovsky N."/>
            <person name="Piazza S."/>
            <person name="Reed J."/>
            <person name="Reid J.F."/>
            <person name="Ring B.Z."/>
            <person name="Ringwald M."/>
            <person name="Rost B."/>
            <person name="Ruan Y."/>
            <person name="Salzberg S.L."/>
            <person name="Sandelin A."/>
            <person name="Schneider C."/>
            <person name="Schoenbach C."/>
            <person name="Sekiguchi K."/>
            <person name="Semple C.A."/>
            <person name="Seno S."/>
            <person name="Sessa L."/>
            <person name="Sheng Y."/>
            <person name="Shibata Y."/>
            <person name="Shimada H."/>
            <person name="Shimada K."/>
            <person name="Silva D."/>
            <person name="Sinclair B."/>
            <person name="Sperling S."/>
            <person name="Stupka E."/>
            <person name="Sugiura K."/>
            <person name="Sultana R."/>
            <person name="Takenaka Y."/>
            <person name="Taki K."/>
            <person name="Tammoja K."/>
            <person name="Tan S.L."/>
            <person name="Tang S."/>
            <person name="Taylor M.S."/>
            <person name="Tegner J."/>
            <person name="Teichmann S.A."/>
            <person name="Ueda H.R."/>
            <person name="van Nimwegen E."/>
            <person name="Verardo R."/>
            <person name="Wei C.L."/>
            <person name="Yagi K."/>
            <person name="Yamanishi H."/>
            <person name="Zabarovsky E."/>
            <person name="Zhu S."/>
            <person name="Zimmer A."/>
            <person name="Hide W."/>
            <person name="Bult C."/>
            <person name="Grimmond S.M."/>
            <person name="Teasdale R.D."/>
            <person name="Liu E.T."/>
            <person name="Brusic V."/>
            <person name="Quackenbush J."/>
            <person name="Wahlestedt C."/>
            <person name="Mattick J.S."/>
            <person name="Hume D.A."/>
            <person name="Kai C."/>
            <person name="Sasaki D."/>
            <person name="Tomaru Y."/>
            <person name="Fukuda S."/>
            <person name="Kanamori-Katayama M."/>
            <person name="Suzuki M."/>
            <person name="Aoki J."/>
            <person name="Arakawa T."/>
            <person name="Iida J."/>
            <person name="Imamura K."/>
            <person name="Itoh M."/>
            <person name="Kato T."/>
            <person name="Kawaji H."/>
            <person name="Kawagashira N."/>
            <person name="Kawashima T."/>
            <person name="Kojima M."/>
            <person name="Kondo S."/>
            <person name="Konno H."/>
            <person name="Nakano K."/>
            <person name="Ninomiya N."/>
            <person name="Nishio T."/>
            <person name="Okada M."/>
            <person name="Plessy C."/>
            <person name="Shibata K."/>
            <person name="Shiraki T."/>
            <person name="Suzuki S."/>
            <person name="Tagami M."/>
            <person name="Waki K."/>
            <person name="Watahiki A."/>
            <person name="Okamura-Oho Y."/>
            <person name="Suzuki H."/>
            <person name="Kawai J."/>
            <person name="Hayashizaki Y."/>
        </authorList>
    </citation>
    <scope>NUCLEOTIDE SEQUENCE [LARGE SCALE MRNA]</scope>
    <source>
        <strain>BALB/cJ</strain>
        <strain>C57BL/6J</strain>
        <strain>DBA/2J</strain>
        <tissue>Bone marrow macrophage</tissue>
        <tissue>Embryonic stem cell</tissue>
        <tissue>Pancreas</tissue>
        <tissue>Small intestine</tissue>
    </source>
</reference>
<reference key="5">
    <citation type="submission" date="2005-07" db="EMBL/GenBank/DDBJ databases">
        <authorList>
            <person name="Mural R.J."/>
            <person name="Adams M.D."/>
            <person name="Myers E.W."/>
            <person name="Smith H.O."/>
            <person name="Venter J.C."/>
        </authorList>
    </citation>
    <scope>NUCLEOTIDE SEQUENCE [LARGE SCALE GENOMIC DNA]</scope>
</reference>
<reference key="6">
    <citation type="journal article" date="2004" name="Genome Res.">
        <title>The status, quality, and expansion of the NIH full-length cDNA project: the Mammalian Gene Collection (MGC).</title>
        <authorList>
            <consortium name="The MGC Project Team"/>
        </authorList>
    </citation>
    <scope>NUCLEOTIDE SEQUENCE [LARGE SCALE MRNA]</scope>
    <source>
        <strain>C57BL/6J</strain>
        <tissue>Brain</tissue>
        <tissue>Kidney</tissue>
    </source>
</reference>
<reference key="7">
    <citation type="journal article" date="2010" name="Cell">
        <title>A tissue-specific atlas of mouse protein phosphorylation and expression.</title>
        <authorList>
            <person name="Huttlin E.L."/>
            <person name="Jedrychowski M.P."/>
            <person name="Elias J.E."/>
            <person name="Goswami T."/>
            <person name="Rad R."/>
            <person name="Beausoleil S.A."/>
            <person name="Villen J."/>
            <person name="Haas W."/>
            <person name="Sowa M.E."/>
            <person name="Gygi S.P."/>
        </authorList>
    </citation>
    <scope>PHOSPHORYLATION [LARGE SCALE ANALYSIS] AT SER-68</scope>
    <scope>IDENTIFICATION BY MASS SPECTROMETRY [LARGE SCALE ANALYSIS]</scope>
    <source>
        <tissue>Brain</tissue>
        <tissue>Brown adipose tissue</tissue>
        <tissue>Heart</tissue>
        <tissue>Kidney</tissue>
        <tissue>Liver</tissue>
        <tissue>Lung</tissue>
        <tissue>Pancreas</tissue>
        <tissue>Spleen</tissue>
        <tissue>Testis</tissue>
    </source>
</reference>
<reference evidence="5 6" key="8">
    <citation type="journal article" date="2022" name="Nature">
        <title>A male germ-cell-specific ribosome controls male fertility.</title>
        <authorList>
            <person name="Li H."/>
            <person name="Huo Y."/>
            <person name="He X."/>
            <person name="Yao L."/>
            <person name="Zhang H."/>
            <person name="Cui Y."/>
            <person name="Xiao H."/>
            <person name="Xie W."/>
            <person name="Zhang D."/>
            <person name="Wang Y."/>
            <person name="Zhang S."/>
            <person name="Tu H."/>
            <person name="Cheng Y."/>
            <person name="Guo Y."/>
            <person name="Cao X."/>
            <person name="Zhu Y."/>
            <person name="Jiang T."/>
            <person name="Guo X."/>
            <person name="Qin Y."/>
            <person name="Sha J."/>
        </authorList>
    </citation>
    <scope>STRUCTURE BY ELECTRON MICROSCOPY (3.03 ANGSTROMS) OF RIBOSOME</scope>
    <scope>FUNCTION</scope>
    <scope>SUBUNIT</scope>
    <scope>SUBCELLULAR LOCATION</scope>
</reference>
<gene>
    <name type="primary">Rpl27a</name>
</gene>